<accession>Q9Z7P2</accession>
<accession>Q9JQG0</accession>
<organism>
    <name type="scientific">Chlamydia pneumoniae</name>
    <name type="common">Chlamydophila pneumoniae</name>
    <dbReference type="NCBI Taxonomy" id="83558"/>
    <lineage>
        <taxon>Bacteria</taxon>
        <taxon>Pseudomonadati</taxon>
        <taxon>Chlamydiota</taxon>
        <taxon>Chlamydiia</taxon>
        <taxon>Chlamydiales</taxon>
        <taxon>Chlamydiaceae</taxon>
        <taxon>Chlamydia/Chlamydophila group</taxon>
        <taxon>Chlamydia</taxon>
    </lineage>
</organism>
<keyword id="KW-0030">Aminoacyl-tRNA synthetase</keyword>
<keyword id="KW-0067">ATP-binding</keyword>
<keyword id="KW-0963">Cytoplasm</keyword>
<keyword id="KW-0436">Ligase</keyword>
<keyword id="KW-0547">Nucleotide-binding</keyword>
<keyword id="KW-0648">Protein biosynthesis</keyword>
<reference key="1">
    <citation type="journal article" date="1999" name="Nat. Genet.">
        <title>Comparative genomes of Chlamydia pneumoniae and C. trachomatis.</title>
        <authorList>
            <person name="Kalman S."/>
            <person name="Mitchell W.P."/>
            <person name="Marathe R."/>
            <person name="Lammel C.J."/>
            <person name="Fan J."/>
            <person name="Hyman R.W."/>
            <person name="Olinger L."/>
            <person name="Grimwood J."/>
            <person name="Davis R.W."/>
            <person name="Stephens R.S."/>
        </authorList>
    </citation>
    <scope>NUCLEOTIDE SEQUENCE [LARGE SCALE GENOMIC DNA]</scope>
    <source>
        <strain>CWL029</strain>
    </source>
</reference>
<reference key="2">
    <citation type="journal article" date="2000" name="Nucleic Acids Res.">
        <title>Genome sequences of Chlamydia trachomatis MoPn and Chlamydia pneumoniae AR39.</title>
        <authorList>
            <person name="Read T.D."/>
            <person name="Brunham R.C."/>
            <person name="Shen C."/>
            <person name="Gill S.R."/>
            <person name="Heidelberg J.F."/>
            <person name="White O."/>
            <person name="Hickey E.K."/>
            <person name="Peterson J.D."/>
            <person name="Utterback T.R."/>
            <person name="Berry K.J."/>
            <person name="Bass S."/>
            <person name="Linher K.D."/>
            <person name="Weidman J.F."/>
            <person name="Khouri H.M."/>
            <person name="Craven B."/>
            <person name="Bowman C."/>
            <person name="Dodson R.J."/>
            <person name="Gwinn M.L."/>
            <person name="Nelson W.C."/>
            <person name="DeBoy R.T."/>
            <person name="Kolonay J.F."/>
            <person name="McClarty G."/>
            <person name="Salzberg S.L."/>
            <person name="Eisen J.A."/>
            <person name="Fraser C.M."/>
        </authorList>
    </citation>
    <scope>NUCLEOTIDE SEQUENCE [LARGE SCALE GENOMIC DNA]</scope>
    <source>
        <strain>AR39</strain>
    </source>
</reference>
<reference key="3">
    <citation type="journal article" date="2000" name="Nucleic Acids Res.">
        <title>Comparison of whole genome sequences of Chlamydia pneumoniae J138 from Japan and CWL029 from USA.</title>
        <authorList>
            <person name="Shirai M."/>
            <person name="Hirakawa H."/>
            <person name="Kimoto M."/>
            <person name="Tabuchi M."/>
            <person name="Kishi F."/>
            <person name="Ouchi K."/>
            <person name="Shiba T."/>
            <person name="Ishii K."/>
            <person name="Hattori M."/>
            <person name="Kuhara S."/>
            <person name="Nakazawa T."/>
        </authorList>
    </citation>
    <scope>NUCLEOTIDE SEQUENCE [LARGE SCALE GENOMIC DNA]</scope>
    <source>
        <strain>J138</strain>
    </source>
</reference>
<reference key="4">
    <citation type="submission" date="2002-05" db="EMBL/GenBank/DDBJ databases">
        <title>The genome sequence of Chlamydia pneumoniae TW183 and comparison with other Chlamydia strains based on whole genome sequence analysis.</title>
        <authorList>
            <person name="Geng M.M."/>
            <person name="Schuhmacher A."/>
            <person name="Muehldorfer I."/>
            <person name="Bensch K.W."/>
            <person name="Schaefer K.P."/>
            <person name="Schneider S."/>
            <person name="Pohl T."/>
            <person name="Essig A."/>
            <person name="Marre R."/>
            <person name="Melchers K."/>
        </authorList>
    </citation>
    <scope>NUCLEOTIDE SEQUENCE [LARGE SCALE GENOMIC DNA]</scope>
    <source>
        <strain>TW-183</strain>
    </source>
</reference>
<gene>
    <name evidence="1" type="primary">aspS</name>
    <name type="ordered locus">CPn_0662</name>
    <name type="ordered locus">CP_0085</name>
    <name type="ordered locus">CpB0688</name>
</gene>
<feature type="chain" id="PRO_0000110854" description="Aspartate--tRNA(Asp/Asn) ligase">
    <location>
        <begin position="1"/>
        <end position="584"/>
    </location>
</feature>
<feature type="region of interest" description="Aspartate" evidence="1">
    <location>
        <begin position="201"/>
        <end position="204"/>
    </location>
</feature>
<feature type="binding site" evidence="1">
    <location>
        <position position="177"/>
    </location>
    <ligand>
        <name>L-aspartate</name>
        <dbReference type="ChEBI" id="CHEBI:29991"/>
    </ligand>
</feature>
<feature type="binding site" evidence="1">
    <location>
        <begin position="223"/>
        <end position="225"/>
    </location>
    <ligand>
        <name>ATP</name>
        <dbReference type="ChEBI" id="CHEBI:30616"/>
    </ligand>
</feature>
<feature type="binding site" evidence="1">
    <location>
        <position position="223"/>
    </location>
    <ligand>
        <name>L-aspartate</name>
        <dbReference type="ChEBI" id="CHEBI:29991"/>
    </ligand>
</feature>
<feature type="binding site" evidence="1">
    <location>
        <position position="232"/>
    </location>
    <ligand>
        <name>ATP</name>
        <dbReference type="ChEBI" id="CHEBI:30616"/>
    </ligand>
</feature>
<feature type="binding site" evidence="1">
    <location>
        <position position="447"/>
    </location>
    <ligand>
        <name>L-aspartate</name>
        <dbReference type="ChEBI" id="CHEBI:29991"/>
    </ligand>
</feature>
<feature type="binding site" evidence="1">
    <location>
        <position position="481"/>
    </location>
    <ligand>
        <name>ATP</name>
        <dbReference type="ChEBI" id="CHEBI:30616"/>
    </ligand>
</feature>
<feature type="binding site" evidence="1">
    <location>
        <position position="488"/>
    </location>
    <ligand>
        <name>L-aspartate</name>
        <dbReference type="ChEBI" id="CHEBI:29991"/>
    </ligand>
</feature>
<feature type="binding site" evidence="1">
    <location>
        <begin position="533"/>
        <end position="536"/>
    </location>
    <ligand>
        <name>ATP</name>
        <dbReference type="ChEBI" id="CHEBI:30616"/>
    </ligand>
</feature>
<feature type="site" description="Important for tRNA non-discrimination" evidence="1">
    <location>
        <position position="32"/>
    </location>
</feature>
<feature type="site" description="Important for tRNA non-discrimination" evidence="1">
    <location>
        <position position="84"/>
    </location>
</feature>
<proteinExistence type="inferred from homology"/>
<sequence length="584" mass="66345">MKYRTHRCNELTSNHIGENVQLAGWVHRYRNHGGVVFIDLRDRFGITQIVCREDEQPELHQRLDAVRSEWVLSVRGKVCPRLAGMENPNLATGHIEVEVASFEVLSKSQNLPFSIADDHINVNEELRLEYRYLDMRRGDIIEKLLCRHQVMLACRNFMDAQGFTEIVTPVLGKSTPEGARDYLVPSRIYPGKFYALPQSPQLFKQLLMVGGLDRYFQIATCFRDEDLRADRQPEFAQIDIEMSFGDTQDLLPIIEQLVATLFATQGIEIPLPLAKMTYQEAKDSYGTDKPDLRFDLKLKDCRDYAKRSSFSIFLDQLAHGGTIKGFCVPGGATMSRKQLDGYTEFVKRYGAMGLVWIKNQEGKVASNIAKFMDEEVFHELFAYFDAKDQDILLLIAAPESVANQSLDHLRRLIAKERELYSDNQYNFVWITDFPLFSLEDGKIVAEHHPFTAPLEEDIPLLETDPLAVRSSSYDLVLNGYEIASGSQRIHNPDLQSQIFTILKISPESIQEKFGFFIKALSFGTPPHLGIALGLDRLVMVLTAAESIREVIAFPKTQKASDLMMNAPSEIMSSQLKELSIKVAF</sequence>
<name>SYDND_CHLPN</name>
<protein>
    <recommendedName>
        <fullName evidence="1">Aspartate--tRNA(Asp/Asn) ligase</fullName>
        <ecNumber evidence="1">6.1.1.23</ecNumber>
    </recommendedName>
    <alternativeName>
        <fullName evidence="1">Aspartyl-tRNA synthetase</fullName>
        <shortName evidence="1">AspRS</shortName>
    </alternativeName>
    <alternativeName>
        <fullName evidence="1">Non-discriminating aspartyl-tRNA synthetase</fullName>
        <shortName evidence="1">ND-AspRS</shortName>
    </alternativeName>
</protein>
<evidence type="ECO:0000255" key="1">
    <source>
        <dbReference type="HAMAP-Rule" id="MF_00044"/>
    </source>
</evidence>
<comment type="function">
    <text evidence="1">Aspartyl-tRNA synthetase with relaxed tRNA specificity since it is able to aspartylate not only its cognate tRNA(Asp) but also tRNA(Asn). Reaction proceeds in two steps: L-aspartate is first activated by ATP to form Asp-AMP and then transferred to the acceptor end of tRNA(Asp/Asn).</text>
</comment>
<comment type="catalytic activity">
    <reaction evidence="1">
        <text>tRNA(Asx) + L-aspartate + ATP = L-aspartyl-tRNA(Asx) + AMP + diphosphate</text>
        <dbReference type="Rhea" id="RHEA:18349"/>
        <dbReference type="Rhea" id="RHEA-COMP:9710"/>
        <dbReference type="Rhea" id="RHEA-COMP:9711"/>
        <dbReference type="ChEBI" id="CHEBI:29991"/>
        <dbReference type="ChEBI" id="CHEBI:30616"/>
        <dbReference type="ChEBI" id="CHEBI:33019"/>
        <dbReference type="ChEBI" id="CHEBI:78442"/>
        <dbReference type="ChEBI" id="CHEBI:78516"/>
        <dbReference type="ChEBI" id="CHEBI:456215"/>
        <dbReference type="EC" id="6.1.1.23"/>
    </reaction>
</comment>
<comment type="subunit">
    <text evidence="1">Homodimer.</text>
</comment>
<comment type="subcellular location">
    <subcellularLocation>
        <location evidence="1">Cytoplasm</location>
    </subcellularLocation>
</comment>
<comment type="similarity">
    <text evidence="1">Belongs to the class-II aminoacyl-tRNA synthetase family. Type 1 subfamily.</text>
</comment>
<dbReference type="EC" id="6.1.1.23" evidence="1"/>
<dbReference type="EMBL" id="AE001363">
    <property type="protein sequence ID" value="AAD18801.1"/>
    <property type="molecule type" value="Genomic_DNA"/>
</dbReference>
<dbReference type="EMBL" id="AE002161">
    <property type="protein sequence ID" value="AAF37971.1"/>
    <property type="molecule type" value="Genomic_DNA"/>
</dbReference>
<dbReference type="EMBL" id="BA000008">
    <property type="protein sequence ID" value="BAA98869.1"/>
    <property type="molecule type" value="Genomic_DNA"/>
</dbReference>
<dbReference type="EMBL" id="AE009440">
    <property type="protein sequence ID" value="AAP98617.1"/>
    <property type="molecule type" value="Genomic_DNA"/>
</dbReference>
<dbReference type="PIR" id="C86573">
    <property type="entry name" value="C86573"/>
</dbReference>
<dbReference type="PIR" id="G72052">
    <property type="entry name" value="G72052"/>
</dbReference>
<dbReference type="RefSeq" id="NP_224858.1">
    <property type="nucleotide sequence ID" value="NC_000922.1"/>
</dbReference>
<dbReference type="RefSeq" id="WP_010883300.1">
    <property type="nucleotide sequence ID" value="NZ_LN847257.1"/>
</dbReference>
<dbReference type="SMR" id="Q9Z7P2"/>
<dbReference type="STRING" id="406984.CPK_ORF00062"/>
<dbReference type="GeneID" id="45050713"/>
<dbReference type="KEGG" id="cpa:CP_0085"/>
<dbReference type="KEGG" id="cpj:aspS"/>
<dbReference type="KEGG" id="cpn:CPn_0662"/>
<dbReference type="KEGG" id="cpt:CpB0688"/>
<dbReference type="PATRIC" id="fig|115713.3.peg.732"/>
<dbReference type="eggNOG" id="COG0173">
    <property type="taxonomic scope" value="Bacteria"/>
</dbReference>
<dbReference type="HOGENOM" id="CLU_014330_3_2_0"/>
<dbReference type="OrthoDB" id="9802326at2"/>
<dbReference type="Proteomes" id="UP000000583">
    <property type="component" value="Chromosome"/>
</dbReference>
<dbReference type="Proteomes" id="UP000000801">
    <property type="component" value="Chromosome"/>
</dbReference>
<dbReference type="GO" id="GO:0005737">
    <property type="term" value="C:cytoplasm"/>
    <property type="evidence" value="ECO:0007669"/>
    <property type="project" value="UniProtKB-SubCell"/>
</dbReference>
<dbReference type="GO" id="GO:0004815">
    <property type="term" value="F:aspartate-tRNA ligase activity"/>
    <property type="evidence" value="ECO:0007669"/>
    <property type="project" value="UniProtKB-UniRule"/>
</dbReference>
<dbReference type="GO" id="GO:0050560">
    <property type="term" value="F:aspartate-tRNA(Asn) ligase activity"/>
    <property type="evidence" value="ECO:0007669"/>
    <property type="project" value="UniProtKB-EC"/>
</dbReference>
<dbReference type="GO" id="GO:0005524">
    <property type="term" value="F:ATP binding"/>
    <property type="evidence" value="ECO:0007669"/>
    <property type="project" value="UniProtKB-UniRule"/>
</dbReference>
<dbReference type="GO" id="GO:0003676">
    <property type="term" value="F:nucleic acid binding"/>
    <property type="evidence" value="ECO:0007669"/>
    <property type="project" value="InterPro"/>
</dbReference>
<dbReference type="GO" id="GO:0006422">
    <property type="term" value="P:aspartyl-tRNA aminoacylation"/>
    <property type="evidence" value="ECO:0007669"/>
    <property type="project" value="UniProtKB-UniRule"/>
</dbReference>
<dbReference type="CDD" id="cd00777">
    <property type="entry name" value="AspRS_core"/>
    <property type="match status" value="1"/>
</dbReference>
<dbReference type="CDD" id="cd04317">
    <property type="entry name" value="EcAspRS_like_N"/>
    <property type="match status" value="1"/>
</dbReference>
<dbReference type="Gene3D" id="3.30.930.10">
    <property type="entry name" value="Bira Bifunctional Protein, Domain 2"/>
    <property type="match status" value="1"/>
</dbReference>
<dbReference type="Gene3D" id="3.30.1360.30">
    <property type="entry name" value="GAD-like domain"/>
    <property type="match status" value="1"/>
</dbReference>
<dbReference type="Gene3D" id="2.40.50.140">
    <property type="entry name" value="Nucleic acid-binding proteins"/>
    <property type="match status" value="1"/>
</dbReference>
<dbReference type="HAMAP" id="MF_00044">
    <property type="entry name" value="Asp_tRNA_synth_type1"/>
    <property type="match status" value="1"/>
</dbReference>
<dbReference type="InterPro" id="IPR004364">
    <property type="entry name" value="Aa-tRNA-synt_II"/>
</dbReference>
<dbReference type="InterPro" id="IPR006195">
    <property type="entry name" value="aa-tRNA-synth_II"/>
</dbReference>
<dbReference type="InterPro" id="IPR045864">
    <property type="entry name" value="aa-tRNA-synth_II/BPL/LPL"/>
</dbReference>
<dbReference type="InterPro" id="IPR004524">
    <property type="entry name" value="Asp-tRNA-ligase_1"/>
</dbReference>
<dbReference type="InterPro" id="IPR047089">
    <property type="entry name" value="Asp-tRNA-ligase_1_N"/>
</dbReference>
<dbReference type="InterPro" id="IPR002312">
    <property type="entry name" value="Asp/Asn-tRNA-synth_IIb"/>
</dbReference>
<dbReference type="InterPro" id="IPR047090">
    <property type="entry name" value="AspRS_core"/>
</dbReference>
<dbReference type="InterPro" id="IPR004115">
    <property type="entry name" value="GAD-like_sf"/>
</dbReference>
<dbReference type="InterPro" id="IPR029351">
    <property type="entry name" value="GAD_dom"/>
</dbReference>
<dbReference type="InterPro" id="IPR012340">
    <property type="entry name" value="NA-bd_OB-fold"/>
</dbReference>
<dbReference type="InterPro" id="IPR004365">
    <property type="entry name" value="NA-bd_OB_tRNA"/>
</dbReference>
<dbReference type="NCBIfam" id="TIGR00459">
    <property type="entry name" value="aspS_bact"/>
    <property type="match status" value="1"/>
</dbReference>
<dbReference type="NCBIfam" id="NF001750">
    <property type="entry name" value="PRK00476.1"/>
    <property type="match status" value="1"/>
</dbReference>
<dbReference type="PANTHER" id="PTHR22594:SF5">
    <property type="entry name" value="ASPARTATE--TRNA LIGASE, MITOCHONDRIAL"/>
    <property type="match status" value="1"/>
</dbReference>
<dbReference type="PANTHER" id="PTHR22594">
    <property type="entry name" value="ASPARTYL/LYSYL-TRNA SYNTHETASE"/>
    <property type="match status" value="1"/>
</dbReference>
<dbReference type="Pfam" id="PF02938">
    <property type="entry name" value="GAD"/>
    <property type="match status" value="1"/>
</dbReference>
<dbReference type="Pfam" id="PF00152">
    <property type="entry name" value="tRNA-synt_2"/>
    <property type="match status" value="1"/>
</dbReference>
<dbReference type="Pfam" id="PF01336">
    <property type="entry name" value="tRNA_anti-codon"/>
    <property type="match status" value="1"/>
</dbReference>
<dbReference type="PRINTS" id="PR01042">
    <property type="entry name" value="TRNASYNTHASP"/>
</dbReference>
<dbReference type="SUPFAM" id="SSF55681">
    <property type="entry name" value="Class II aaRS and biotin synthetases"/>
    <property type="match status" value="1"/>
</dbReference>
<dbReference type="SUPFAM" id="SSF55261">
    <property type="entry name" value="GAD domain-like"/>
    <property type="match status" value="1"/>
</dbReference>
<dbReference type="SUPFAM" id="SSF50249">
    <property type="entry name" value="Nucleic acid-binding proteins"/>
    <property type="match status" value="1"/>
</dbReference>
<dbReference type="PROSITE" id="PS50862">
    <property type="entry name" value="AA_TRNA_LIGASE_II"/>
    <property type="match status" value="1"/>
</dbReference>